<keyword id="KW-0002">3D-structure</keyword>
<keyword id="KW-0025">Alternative splicing</keyword>
<keyword id="KW-0131">Cell cycle</keyword>
<keyword id="KW-0132">Cell division</keyword>
<keyword id="KW-0175">Coiled coil</keyword>
<keyword id="KW-0963">Cytoplasm</keyword>
<keyword id="KW-0206">Cytoskeleton</keyword>
<keyword id="KW-0493">Microtubule</keyword>
<keyword id="KW-0498">Mitosis</keyword>
<keyword id="KW-0597">Phosphoprotein</keyword>
<keyword id="KW-1267">Proteomics identification</keyword>
<keyword id="KW-1185">Reference proteome</keyword>
<dbReference type="EMBL" id="U82695">
    <property type="status" value="NOT_ANNOTATED_CDS"/>
    <property type="molecule type" value="Genomic_DNA"/>
</dbReference>
<dbReference type="EMBL" id="CH471172">
    <property type="protein sequence ID" value="EAW72866.1"/>
    <property type="status" value="ALT_INIT"/>
    <property type="molecule type" value="Genomic_DNA"/>
</dbReference>
<dbReference type="EMBL" id="CH471172">
    <property type="protein sequence ID" value="EAW72868.1"/>
    <property type="status" value="ALT_INIT"/>
    <property type="molecule type" value="Genomic_DNA"/>
</dbReference>
<dbReference type="EMBL" id="CH471172">
    <property type="protein sequence ID" value="EAW72869.1"/>
    <property type="status" value="ALT_INIT"/>
    <property type="molecule type" value="Genomic_DNA"/>
</dbReference>
<dbReference type="EMBL" id="CH471172">
    <property type="protein sequence ID" value="EAW72871.1"/>
    <property type="status" value="ALT_INIT"/>
    <property type="molecule type" value="Genomic_DNA"/>
</dbReference>
<dbReference type="EMBL" id="BC008141">
    <property type="protein sequence ID" value="AAH08141.3"/>
    <property type="status" value="ALT_INIT"/>
    <property type="molecule type" value="mRNA"/>
</dbReference>
<dbReference type="EMBL" id="CA441020">
    <property type="status" value="NOT_ANNOTATED_CDS"/>
    <property type="molecule type" value="mRNA"/>
</dbReference>
<dbReference type="EMBL" id="AK300650">
    <property type="protein sequence ID" value="BAG62338.1"/>
    <property type="molecule type" value="mRNA"/>
</dbReference>
<dbReference type="EMBL" id="AF267739">
    <property type="protein sequence ID" value="AAF75785.1"/>
    <property type="molecule type" value="mRNA"/>
</dbReference>
<dbReference type="EMBL" id="X99270">
    <property type="protein sequence ID" value="CAA67665.1"/>
    <property type="status" value="ALT_SEQ"/>
    <property type="molecule type" value="mRNA"/>
</dbReference>
<dbReference type="EMBL" id="AL122036">
    <property type="protein sequence ID" value="CAB59176.1"/>
    <property type="molecule type" value="mRNA"/>
</dbReference>
<dbReference type="CCDS" id="CCDS35438.2">
    <molecule id="Q99871-1"/>
</dbReference>
<dbReference type="PIR" id="T34551">
    <property type="entry name" value="T34551"/>
</dbReference>
<dbReference type="RefSeq" id="NP_001372410.1">
    <molecule id="Q99871-2"/>
    <property type="nucleotide sequence ID" value="NM_001385481.1"/>
</dbReference>
<dbReference type="RefSeq" id="NP_001372411.1">
    <molecule id="Q99871-1"/>
    <property type="nucleotide sequence ID" value="NM_001385482.1"/>
</dbReference>
<dbReference type="RefSeq" id="NP_001372412.1">
    <molecule id="Q99871-2"/>
    <property type="nucleotide sequence ID" value="NM_001385483.1"/>
</dbReference>
<dbReference type="RefSeq" id="NP_059988.3">
    <property type="nucleotide sequence ID" value="NM_017518.7"/>
</dbReference>
<dbReference type="PDB" id="7SQK">
    <property type="method" value="EM"/>
    <property type="resolution" value="8.00 A"/>
    <property type="chains" value="G=1-358"/>
</dbReference>
<dbReference type="PDBsum" id="7SQK"/>
<dbReference type="EMDB" id="EMD-25387"/>
<dbReference type="SMR" id="Q99871"/>
<dbReference type="BioGRID" id="120718">
    <property type="interactions" value="126"/>
</dbReference>
<dbReference type="ComplexPortal" id="CPX-1847">
    <property type="entry name" value="HAUS complex"/>
</dbReference>
<dbReference type="CORUM" id="Q99871"/>
<dbReference type="DIP" id="DIP-32974N"/>
<dbReference type="FunCoup" id="Q99871">
    <property type="interactions" value="943"/>
</dbReference>
<dbReference type="IntAct" id="Q99871">
    <property type="interactions" value="113"/>
</dbReference>
<dbReference type="MINT" id="Q99871"/>
<dbReference type="STRING" id="9606.ENSP00000359230"/>
<dbReference type="GlyGen" id="Q99871">
    <property type="glycosylation" value="1 site, 1 O-linked glycan (1 site)"/>
</dbReference>
<dbReference type="iPTMnet" id="Q99871"/>
<dbReference type="PhosphoSitePlus" id="Q99871"/>
<dbReference type="BioMuta" id="HAUS7"/>
<dbReference type="jPOST" id="Q99871"/>
<dbReference type="MassIVE" id="Q99871"/>
<dbReference type="PaxDb" id="9606-ENSP00000359230"/>
<dbReference type="PeptideAtlas" id="Q99871"/>
<dbReference type="ProteomicsDB" id="78508">
    <molecule id="Q99871-1"/>
</dbReference>
<dbReference type="ProteomicsDB" id="78509">
    <molecule id="Q99871-2"/>
</dbReference>
<dbReference type="ProteomicsDB" id="78510">
    <molecule id="Q99871-3"/>
</dbReference>
<dbReference type="Pumba" id="Q99871"/>
<dbReference type="Antibodypedia" id="461">
    <property type="antibodies" value="315 antibodies from 22 providers"/>
</dbReference>
<dbReference type="DNASU" id="55559"/>
<dbReference type="Ensembl" id="ENST00000370211.10">
    <molecule id="Q99871-1"/>
    <property type="protein sequence ID" value="ENSP00000359230.6"/>
    <property type="gene ID" value="ENSG00000213397.12"/>
</dbReference>
<dbReference type="GeneID" id="55559"/>
<dbReference type="MANE-Select" id="ENST00000370211.10">
    <property type="protein sequence ID" value="ENSP00000359230.6"/>
    <property type="RefSeq nucleotide sequence ID" value="NM_001385482.1"/>
    <property type="RefSeq protein sequence ID" value="NP_001372411.1"/>
</dbReference>
<dbReference type="UCSC" id="uc004fho.3">
    <molecule id="Q99871-1"/>
    <property type="organism name" value="human"/>
</dbReference>
<dbReference type="AGR" id="HGNC:32979"/>
<dbReference type="CTD" id="55559"/>
<dbReference type="DisGeNET" id="55559"/>
<dbReference type="GeneCards" id="HAUS7"/>
<dbReference type="HGNC" id="HGNC:32979">
    <property type="gene designation" value="HAUS7"/>
</dbReference>
<dbReference type="HPA" id="ENSG00000213397">
    <property type="expression patterns" value="Low tissue specificity"/>
</dbReference>
<dbReference type="MIM" id="300540">
    <property type="type" value="gene"/>
</dbReference>
<dbReference type="neXtProt" id="NX_Q99871"/>
<dbReference type="OpenTargets" id="ENSG00000213397"/>
<dbReference type="PharmGKB" id="PA165756645"/>
<dbReference type="VEuPathDB" id="HostDB:ENSG00000213397"/>
<dbReference type="eggNOG" id="ENOG502RYVK">
    <property type="taxonomic scope" value="Eukaryota"/>
</dbReference>
<dbReference type="GeneTree" id="ENSGT00390000003937"/>
<dbReference type="HOGENOM" id="CLU_065168_0_0_1"/>
<dbReference type="InParanoid" id="Q99871"/>
<dbReference type="OrthoDB" id="6435999at2759"/>
<dbReference type="PAN-GO" id="Q99871">
    <property type="GO annotations" value="4 GO annotations based on evolutionary models"/>
</dbReference>
<dbReference type="PhylomeDB" id="Q99871"/>
<dbReference type="TreeFam" id="TF333445"/>
<dbReference type="PathwayCommons" id="Q99871"/>
<dbReference type="Reactome" id="R-HSA-2565942">
    <property type="pathway name" value="Regulation of PLK1 Activity at G2/M Transition"/>
</dbReference>
<dbReference type="Reactome" id="R-HSA-380259">
    <property type="pathway name" value="Loss of Nlp from mitotic centrosomes"/>
</dbReference>
<dbReference type="Reactome" id="R-HSA-380270">
    <property type="pathway name" value="Recruitment of mitotic centrosome proteins and complexes"/>
</dbReference>
<dbReference type="Reactome" id="R-HSA-380284">
    <property type="pathway name" value="Loss of proteins required for interphase microtubule organization from the centrosome"/>
</dbReference>
<dbReference type="Reactome" id="R-HSA-380320">
    <property type="pathway name" value="Recruitment of NuMA to mitotic centrosomes"/>
</dbReference>
<dbReference type="Reactome" id="R-HSA-5620912">
    <property type="pathway name" value="Anchoring of the basal body to the plasma membrane"/>
</dbReference>
<dbReference type="Reactome" id="R-HSA-8854518">
    <property type="pathway name" value="AURKA Activation by TPX2"/>
</dbReference>
<dbReference type="SignaLink" id="Q99871"/>
<dbReference type="SIGNOR" id="Q99871"/>
<dbReference type="BioGRID-ORCS" id="55559">
    <property type="hits" value="384 hits in 727 CRISPR screens"/>
</dbReference>
<dbReference type="ChiTaRS" id="HAUS7">
    <property type="organism name" value="human"/>
</dbReference>
<dbReference type="GenomeRNAi" id="55559"/>
<dbReference type="Pharos" id="Q99871">
    <property type="development level" value="Tbio"/>
</dbReference>
<dbReference type="PRO" id="PR:Q99871"/>
<dbReference type="Proteomes" id="UP000005640">
    <property type="component" value="Chromosome X"/>
</dbReference>
<dbReference type="RNAct" id="Q99871">
    <property type="molecule type" value="protein"/>
</dbReference>
<dbReference type="Bgee" id="ENSG00000213397">
    <property type="expression patterns" value="Expressed in ascending aorta and 95 other cell types or tissues"/>
</dbReference>
<dbReference type="ExpressionAtlas" id="Q99871">
    <property type="expression patterns" value="baseline and differential"/>
</dbReference>
<dbReference type="GO" id="GO:0005813">
    <property type="term" value="C:centrosome"/>
    <property type="evidence" value="ECO:0000314"/>
    <property type="project" value="HPA"/>
</dbReference>
<dbReference type="GO" id="GO:0036064">
    <property type="term" value="C:ciliary basal body"/>
    <property type="evidence" value="ECO:0000314"/>
    <property type="project" value="HPA"/>
</dbReference>
<dbReference type="GO" id="GO:0005829">
    <property type="term" value="C:cytosol"/>
    <property type="evidence" value="ECO:0000304"/>
    <property type="project" value="Reactome"/>
</dbReference>
<dbReference type="GO" id="GO:0070652">
    <property type="term" value="C:HAUS complex"/>
    <property type="evidence" value="ECO:0000314"/>
    <property type="project" value="UniProtKB"/>
</dbReference>
<dbReference type="GO" id="GO:1990498">
    <property type="term" value="C:mitotic spindle microtubule"/>
    <property type="evidence" value="ECO:0000314"/>
    <property type="project" value="UniProtKB"/>
</dbReference>
<dbReference type="GO" id="GO:0005730">
    <property type="term" value="C:nucleolus"/>
    <property type="evidence" value="ECO:0000314"/>
    <property type="project" value="HPA"/>
</dbReference>
<dbReference type="GO" id="GO:0005886">
    <property type="term" value="C:plasma membrane"/>
    <property type="evidence" value="ECO:0000314"/>
    <property type="project" value="HPA"/>
</dbReference>
<dbReference type="GO" id="GO:0051011">
    <property type="term" value="F:microtubule minus-end binding"/>
    <property type="evidence" value="ECO:0000318"/>
    <property type="project" value="GO_Central"/>
</dbReference>
<dbReference type="GO" id="GO:0031996">
    <property type="term" value="F:thioesterase binding"/>
    <property type="evidence" value="ECO:0000353"/>
    <property type="project" value="UniProtKB"/>
</dbReference>
<dbReference type="GO" id="GO:0051301">
    <property type="term" value="P:cell division"/>
    <property type="evidence" value="ECO:0007669"/>
    <property type="project" value="UniProtKB-KW"/>
</dbReference>
<dbReference type="GO" id="GO:0007098">
    <property type="term" value="P:centrosome cycle"/>
    <property type="evidence" value="ECO:0000315"/>
    <property type="project" value="UniProtKB"/>
</dbReference>
<dbReference type="GO" id="GO:0031023">
    <property type="term" value="P:microtubule organizing center organization"/>
    <property type="evidence" value="ECO:0000318"/>
    <property type="project" value="GO_Central"/>
</dbReference>
<dbReference type="GO" id="GO:0010968">
    <property type="term" value="P:regulation of microtubule nucleation"/>
    <property type="evidence" value="ECO:0000303"/>
    <property type="project" value="ComplexPortal"/>
</dbReference>
<dbReference type="GO" id="GO:0051225">
    <property type="term" value="P:spindle assembly"/>
    <property type="evidence" value="ECO:0000315"/>
    <property type="project" value="UniProtKB"/>
</dbReference>
<dbReference type="InterPro" id="IPR029711">
    <property type="entry name" value="Haus7-like"/>
</dbReference>
<dbReference type="PANTHER" id="PTHR14352">
    <property type="entry name" value="HAUS AUGMIN-LIKE COMPLEX SUBUNIT 7"/>
    <property type="match status" value="1"/>
</dbReference>
<dbReference type="PANTHER" id="PTHR14352:SF2">
    <property type="entry name" value="HAUS AUGMIN-LIKE COMPLEX SUBUNIT 7"/>
    <property type="match status" value="1"/>
</dbReference>
<proteinExistence type="evidence at protein level"/>
<organism>
    <name type="scientific">Homo sapiens</name>
    <name type="common">Human</name>
    <dbReference type="NCBI Taxonomy" id="9606"/>
    <lineage>
        <taxon>Eukaryota</taxon>
        <taxon>Metazoa</taxon>
        <taxon>Chordata</taxon>
        <taxon>Craniata</taxon>
        <taxon>Vertebrata</taxon>
        <taxon>Euteleostomi</taxon>
        <taxon>Mammalia</taxon>
        <taxon>Eutheria</taxon>
        <taxon>Euarchontoglires</taxon>
        <taxon>Primates</taxon>
        <taxon>Haplorrhini</taxon>
        <taxon>Catarrhini</taxon>
        <taxon>Hominidae</taxon>
        <taxon>Homo</taxon>
    </lineage>
</organism>
<comment type="function">
    <text evidence="4 5">Contributes to mitotic spindle assembly, maintenance of centrosome integrity and completion of cytokinesis as part of the HAUS augmin-like complex.</text>
</comment>
<comment type="subunit">
    <text evidence="3 4 5 6">Component of the HAUS augmin-like complex. The complex interacts with the gamma-tubulin ring complex and this interaction is required for spindle assembly. Interacts with UCHL5 (PubMed:11163772). Interacts with EML3 (phosphorylated at 'Thr-881') (PubMed:30723163).</text>
</comment>
<comment type="interaction">
    <interactant intactId="EBI-395719">
        <id>Q99871</id>
    </interactant>
    <interactant intactId="EBI-492498">
        <id>P18848</id>
        <label>ATF4</label>
    </interactant>
    <organismsDiffer>false</organismsDiffer>
    <experiments>3</experiments>
</comment>
<comment type="interaction">
    <interactant intactId="EBI-395719">
        <id>Q99871</id>
    </interactant>
    <interactant intactId="EBI-12593112">
        <id>O75190-2</id>
        <label>DNAJB6</label>
    </interactant>
    <organismsDiffer>false</organismsDiffer>
    <experiments>3</experiments>
</comment>
<comment type="interaction">
    <interactant intactId="EBI-395719">
        <id>Q99871</id>
    </interactant>
    <interactant intactId="EBI-12082590">
        <id>Q6W0C5</id>
        <label>DPPA3</label>
    </interactant>
    <organismsDiffer>false</organismsDiffer>
    <experiments>3</experiments>
</comment>
<comment type="interaction">
    <interactant intactId="EBI-395719">
        <id>Q99871</id>
    </interactant>
    <interactant intactId="EBI-2558196">
        <id>Q7Z4H7</id>
        <label>HAUS6</label>
    </interactant>
    <organismsDiffer>false</organismsDiffer>
    <experiments>5</experiments>
</comment>
<comment type="interaction">
    <interactant intactId="EBI-395719">
        <id>Q99871</id>
    </interactant>
    <interactant intactId="EBI-517086">
        <id>O43464</id>
        <label>HTRA2</label>
    </interactant>
    <organismsDiffer>false</organismsDiffer>
    <experiments>3</experiments>
</comment>
<comment type="interaction">
    <interactant intactId="EBI-395719">
        <id>Q99871</id>
    </interactant>
    <interactant intactId="EBI-466029">
        <id>P42858</id>
        <label>HTT</label>
    </interactant>
    <organismsDiffer>false</organismsDiffer>
    <experiments>18</experiments>
</comment>
<comment type="interaction">
    <interactant intactId="EBI-395719">
        <id>Q99871</id>
    </interactant>
    <interactant intactId="EBI-948266">
        <id>O14901</id>
        <label>KLF11</label>
    </interactant>
    <organismsDiffer>false</organismsDiffer>
    <experiments>3</experiments>
</comment>
<comment type="interaction">
    <interactant intactId="EBI-395719">
        <id>Q99871</id>
    </interactant>
    <interactant intactId="EBI-6190702">
        <id>P28331-2</id>
        <label>NDUFS1</label>
    </interactant>
    <organismsDiffer>false</organismsDiffer>
    <experiments>3</experiments>
</comment>
<comment type="interaction">
    <interactant intactId="EBI-395719">
        <id>Q99871</id>
    </interactant>
    <interactant intactId="EBI-2811583">
        <id>Q9BVL2</id>
        <label>NUP58</label>
    </interactant>
    <organismsDiffer>false</organismsDiffer>
    <experiments>3</experiments>
</comment>
<comment type="interaction">
    <interactant intactId="EBI-395719">
        <id>Q99871</id>
    </interactant>
    <interactant intactId="EBI-25929070">
        <id>Q9BZ23-2</id>
        <label>PANK2</label>
    </interactant>
    <organismsDiffer>false</organismsDiffer>
    <experiments>3</experiments>
</comment>
<comment type="interaction">
    <interactant intactId="EBI-395719">
        <id>Q99871</id>
    </interactant>
    <interactant intactId="EBI-752074">
        <id>P41219</id>
        <label>PRPH</label>
    </interactant>
    <organismsDiffer>false</organismsDiffer>
    <experiments>3</experiments>
</comment>
<comment type="interaction">
    <interactant intactId="EBI-395719">
        <id>Q99871</id>
    </interactant>
    <interactant intactId="EBI-5235340">
        <id>Q7Z699</id>
        <label>SPRED1</label>
    </interactant>
    <organismsDiffer>false</organismsDiffer>
    <experiments>3</experiments>
</comment>
<comment type="subcellular location">
    <subcellularLocation>
        <location evidence="4 5">Cytoplasm</location>
        <location evidence="4 5">Cytoskeleton</location>
        <location evidence="4 5">Microtubule organizing center</location>
        <location evidence="4 5">Centrosome</location>
    </subcellularLocation>
    <subcellularLocation>
        <location evidence="4 5 6">Cytoplasm</location>
        <location evidence="4 5 6">Cytoskeleton</location>
        <location evidence="4 5 6">Spindle</location>
    </subcellularLocation>
    <text evidence="4 5 6">Localizes to interphase centrosomes and to mitotic spindle microtubules.</text>
</comment>
<comment type="alternative products">
    <event type="alternative splicing"/>
    <isoform>
        <id>Q99871-1</id>
        <name>1</name>
        <sequence type="displayed"/>
    </isoform>
    <isoform>
        <id>Q99871-2</id>
        <name>2</name>
        <sequence type="described" ref="VSP_037669"/>
    </isoform>
    <isoform>
        <id>Q99871-3</id>
        <name>3</name>
        <sequence type="described" ref="VSP_040920 VSP_040921"/>
    </isoform>
</comment>
<comment type="tissue specificity">
    <text evidence="3">Detected in spleen, thymus, testis, ovary, small intestine and colon, with highest levels of expression in testis and ovary.</text>
</comment>
<comment type="similarity">
    <text evidence="10">Belongs to the HAUS7 family.</text>
</comment>
<comment type="sequence caution" evidence="10">
    <conflict type="erroneous initiation">
        <sequence resource="EMBL-CDS" id="AAH08141"/>
    </conflict>
    <text>Extended N-terminus.</text>
</comment>
<comment type="sequence caution" evidence="10">
    <conflict type="frameshift">
        <sequence resource="EMBL-CDS" id="CAA67665"/>
    </conflict>
</comment>
<comment type="sequence caution" evidence="10">
    <conflict type="miscellaneous discrepancy">
        <sequence resource="EMBL-CDS" id="CAA67665"/>
    </conflict>
    <text>Chimera. The N-terminal part of the clone up to position 91 maps to another chromosome.</text>
</comment>
<comment type="sequence caution" evidence="10">
    <conflict type="erroneous initiation">
        <sequence resource="EMBL-CDS" id="EAW72866"/>
    </conflict>
    <text>Extended N-terminus.</text>
</comment>
<comment type="sequence caution" evidence="10">
    <conflict type="erroneous initiation">
        <sequence resource="EMBL-CDS" id="EAW72868"/>
    </conflict>
    <text>Extended N-terminus.</text>
</comment>
<comment type="sequence caution" evidence="10">
    <conflict type="erroneous initiation">
        <sequence resource="EMBL-CDS" id="EAW72869"/>
    </conflict>
    <text>Extended N-terminus.</text>
</comment>
<comment type="sequence caution" evidence="10">
    <conflict type="erroneous initiation">
        <sequence resource="EMBL-CDS" id="EAW72871"/>
    </conflict>
    <text>Extended N-terminus.</text>
</comment>
<protein>
    <recommendedName>
        <fullName>HAUS augmin-like complex subunit 7</fullName>
    </recommendedName>
    <alternativeName>
        <fullName>26S proteasome-associated UCH37-interacting protein 1</fullName>
    </alternativeName>
    <alternativeName>
        <fullName>UCHL5-interacting protein</fullName>
    </alternativeName>
    <alternativeName>
        <fullName>X-linked protein STS1769</fullName>
    </alternativeName>
</protein>
<evidence type="ECO:0000255" key="1"/>
<evidence type="ECO:0000256" key="2">
    <source>
        <dbReference type="SAM" id="MobiDB-lite"/>
    </source>
</evidence>
<evidence type="ECO:0000269" key="3">
    <source>
    </source>
</evidence>
<evidence type="ECO:0000269" key="4">
    <source>
    </source>
</evidence>
<evidence type="ECO:0000269" key="5">
    <source>
    </source>
</evidence>
<evidence type="ECO:0000269" key="6">
    <source>
    </source>
</evidence>
<evidence type="ECO:0000303" key="7">
    <source>
    </source>
</evidence>
<evidence type="ECO:0000303" key="8">
    <source>
    </source>
</evidence>
<evidence type="ECO:0000303" key="9">
    <source>
    </source>
</evidence>
<evidence type="ECO:0000305" key="10"/>
<evidence type="ECO:0007744" key="11">
    <source>
    </source>
</evidence>
<evidence type="ECO:0007744" key="12">
    <source>
    </source>
</evidence>
<sequence length="358" mass="39794">MAGQDAGCGRGGDDYSEDEGDSSVSRAAVEVFGKLKDLNCPFLEGLYITEPKTIQELLCSPSEYRLEILEWMCTRVWPSLQDRFSSLKGVPTEVKIQEMTKLGHELMLCAPDDQELLKGCACAQKQLHFMDQLLDTIRSLTIGCSSCSSLMEHFEDTREKNEALLGELFSSPHLQMLLNPECDPWPLDMQPLLNKQSDDWQWASASAKSEEEEKLAELARQLQESAAKLHALRTEYFAQHEQGAAAGAADISTLDQKLRLVTSDFHQLILAFLQVYDDELGECCQRPGPDLHPCGPIIQATHQNLTSYSQLLQVVMAVADTSAKAVETVKKQQGEQICWGGSSSVMSLATKMNELMEK</sequence>
<accession>Q99871</accession>
<accession>B4DUH6</accession>
<accession>D3DWT9</accession>
<accession>Q96HS8</accession>
<accession>Q9NP54</accession>
<accession>Q9UFH9</accession>
<feature type="chain" id="PRO_0000097552" description="HAUS augmin-like complex subunit 7">
    <location>
        <begin position="1"/>
        <end position="358"/>
    </location>
</feature>
<feature type="region of interest" description="Disordered" evidence="2">
    <location>
        <begin position="1"/>
        <end position="20"/>
    </location>
</feature>
<feature type="coiled-coil region" evidence="1">
    <location>
        <begin position="203"/>
        <end position="236"/>
    </location>
</feature>
<feature type="compositionally biased region" description="Gly residues" evidence="2">
    <location>
        <begin position="1"/>
        <end position="10"/>
    </location>
</feature>
<feature type="modified residue" description="Phosphoserine" evidence="11 12">
    <location>
        <position position="16"/>
    </location>
</feature>
<feature type="splice variant" id="VSP_037669" description="In isoform 2." evidence="8">
    <original>Q</original>
    <variation>QIPRGQPKKPALVTMTTVPTCATLPLAQGFRDVHFGFLSERLRAFQPLTGWSCETPRSGM</variation>
    <location>
        <position position="310"/>
    </location>
</feature>
<feature type="splice variant" id="VSP_040920" description="In isoform 3." evidence="7 9">
    <original>LLQVVMAVADTSAKAVETV</original>
    <variation>VRVPFPSPLTAPSPVHSD</variation>
    <location>
        <begin position="311"/>
        <end position="329"/>
    </location>
</feature>
<feature type="splice variant" id="VSP_040921" description="In isoform 3." evidence="7 9">
    <location>
        <begin position="330"/>
        <end position="358"/>
    </location>
</feature>
<reference key="1">
    <citation type="journal article" date="2005" name="Nature">
        <title>The DNA sequence of the human X chromosome.</title>
        <authorList>
            <person name="Ross M.T."/>
            <person name="Grafham D.V."/>
            <person name="Coffey A.J."/>
            <person name="Scherer S."/>
            <person name="McLay K."/>
            <person name="Muzny D."/>
            <person name="Platzer M."/>
            <person name="Howell G.R."/>
            <person name="Burrows C."/>
            <person name="Bird C.P."/>
            <person name="Frankish A."/>
            <person name="Lovell F.L."/>
            <person name="Howe K.L."/>
            <person name="Ashurst J.L."/>
            <person name="Fulton R.S."/>
            <person name="Sudbrak R."/>
            <person name="Wen G."/>
            <person name="Jones M.C."/>
            <person name="Hurles M.E."/>
            <person name="Andrews T.D."/>
            <person name="Scott C.E."/>
            <person name="Searle S."/>
            <person name="Ramser J."/>
            <person name="Whittaker A."/>
            <person name="Deadman R."/>
            <person name="Carter N.P."/>
            <person name="Hunt S.E."/>
            <person name="Chen R."/>
            <person name="Cree A."/>
            <person name="Gunaratne P."/>
            <person name="Havlak P."/>
            <person name="Hodgson A."/>
            <person name="Metzker M.L."/>
            <person name="Richards S."/>
            <person name="Scott G."/>
            <person name="Steffen D."/>
            <person name="Sodergren E."/>
            <person name="Wheeler D.A."/>
            <person name="Worley K.C."/>
            <person name="Ainscough R."/>
            <person name="Ambrose K.D."/>
            <person name="Ansari-Lari M.A."/>
            <person name="Aradhya S."/>
            <person name="Ashwell R.I."/>
            <person name="Babbage A.K."/>
            <person name="Bagguley C.L."/>
            <person name="Ballabio A."/>
            <person name="Banerjee R."/>
            <person name="Barker G.E."/>
            <person name="Barlow K.F."/>
            <person name="Barrett I.P."/>
            <person name="Bates K.N."/>
            <person name="Beare D.M."/>
            <person name="Beasley H."/>
            <person name="Beasley O."/>
            <person name="Beck A."/>
            <person name="Bethel G."/>
            <person name="Blechschmidt K."/>
            <person name="Brady N."/>
            <person name="Bray-Allen S."/>
            <person name="Bridgeman A.M."/>
            <person name="Brown A.J."/>
            <person name="Brown M.J."/>
            <person name="Bonnin D."/>
            <person name="Bruford E.A."/>
            <person name="Buhay C."/>
            <person name="Burch P."/>
            <person name="Burford D."/>
            <person name="Burgess J."/>
            <person name="Burrill W."/>
            <person name="Burton J."/>
            <person name="Bye J.M."/>
            <person name="Carder C."/>
            <person name="Carrel L."/>
            <person name="Chako J."/>
            <person name="Chapman J.C."/>
            <person name="Chavez D."/>
            <person name="Chen E."/>
            <person name="Chen G."/>
            <person name="Chen Y."/>
            <person name="Chen Z."/>
            <person name="Chinault C."/>
            <person name="Ciccodicola A."/>
            <person name="Clark S.Y."/>
            <person name="Clarke G."/>
            <person name="Clee C.M."/>
            <person name="Clegg S."/>
            <person name="Clerc-Blankenburg K."/>
            <person name="Clifford K."/>
            <person name="Cobley V."/>
            <person name="Cole C.G."/>
            <person name="Conquer J.S."/>
            <person name="Corby N."/>
            <person name="Connor R.E."/>
            <person name="David R."/>
            <person name="Davies J."/>
            <person name="Davis C."/>
            <person name="Davis J."/>
            <person name="Delgado O."/>
            <person name="Deshazo D."/>
            <person name="Dhami P."/>
            <person name="Ding Y."/>
            <person name="Dinh H."/>
            <person name="Dodsworth S."/>
            <person name="Draper H."/>
            <person name="Dugan-Rocha S."/>
            <person name="Dunham A."/>
            <person name="Dunn M."/>
            <person name="Durbin K.J."/>
            <person name="Dutta I."/>
            <person name="Eades T."/>
            <person name="Ellwood M."/>
            <person name="Emery-Cohen A."/>
            <person name="Errington H."/>
            <person name="Evans K.L."/>
            <person name="Faulkner L."/>
            <person name="Francis F."/>
            <person name="Frankland J."/>
            <person name="Fraser A.E."/>
            <person name="Galgoczy P."/>
            <person name="Gilbert J."/>
            <person name="Gill R."/>
            <person name="Gloeckner G."/>
            <person name="Gregory S.G."/>
            <person name="Gribble S."/>
            <person name="Griffiths C."/>
            <person name="Grocock R."/>
            <person name="Gu Y."/>
            <person name="Gwilliam R."/>
            <person name="Hamilton C."/>
            <person name="Hart E.A."/>
            <person name="Hawes A."/>
            <person name="Heath P.D."/>
            <person name="Heitmann K."/>
            <person name="Hennig S."/>
            <person name="Hernandez J."/>
            <person name="Hinzmann B."/>
            <person name="Ho S."/>
            <person name="Hoffs M."/>
            <person name="Howden P.J."/>
            <person name="Huckle E.J."/>
            <person name="Hume J."/>
            <person name="Hunt P.J."/>
            <person name="Hunt A.R."/>
            <person name="Isherwood J."/>
            <person name="Jacob L."/>
            <person name="Johnson D."/>
            <person name="Jones S."/>
            <person name="de Jong P.J."/>
            <person name="Joseph S.S."/>
            <person name="Keenan S."/>
            <person name="Kelly S."/>
            <person name="Kershaw J.K."/>
            <person name="Khan Z."/>
            <person name="Kioschis P."/>
            <person name="Klages S."/>
            <person name="Knights A.J."/>
            <person name="Kosiura A."/>
            <person name="Kovar-Smith C."/>
            <person name="Laird G.K."/>
            <person name="Langford C."/>
            <person name="Lawlor S."/>
            <person name="Leversha M."/>
            <person name="Lewis L."/>
            <person name="Liu W."/>
            <person name="Lloyd C."/>
            <person name="Lloyd D.M."/>
            <person name="Loulseged H."/>
            <person name="Loveland J.E."/>
            <person name="Lovell J.D."/>
            <person name="Lozado R."/>
            <person name="Lu J."/>
            <person name="Lyne R."/>
            <person name="Ma J."/>
            <person name="Maheshwari M."/>
            <person name="Matthews L.H."/>
            <person name="McDowall J."/>
            <person name="McLaren S."/>
            <person name="McMurray A."/>
            <person name="Meidl P."/>
            <person name="Meitinger T."/>
            <person name="Milne S."/>
            <person name="Miner G."/>
            <person name="Mistry S.L."/>
            <person name="Morgan M."/>
            <person name="Morris S."/>
            <person name="Mueller I."/>
            <person name="Mullikin J.C."/>
            <person name="Nguyen N."/>
            <person name="Nordsiek G."/>
            <person name="Nyakatura G."/>
            <person name="O'dell C.N."/>
            <person name="Okwuonu G."/>
            <person name="Palmer S."/>
            <person name="Pandian R."/>
            <person name="Parker D."/>
            <person name="Parrish J."/>
            <person name="Pasternak S."/>
            <person name="Patel D."/>
            <person name="Pearce A.V."/>
            <person name="Pearson D.M."/>
            <person name="Pelan S.E."/>
            <person name="Perez L."/>
            <person name="Porter K.M."/>
            <person name="Ramsey Y."/>
            <person name="Reichwald K."/>
            <person name="Rhodes S."/>
            <person name="Ridler K.A."/>
            <person name="Schlessinger D."/>
            <person name="Schueler M.G."/>
            <person name="Sehra H.K."/>
            <person name="Shaw-Smith C."/>
            <person name="Shen H."/>
            <person name="Sheridan E.M."/>
            <person name="Shownkeen R."/>
            <person name="Skuce C.D."/>
            <person name="Smith M.L."/>
            <person name="Sotheran E.C."/>
            <person name="Steingruber H.E."/>
            <person name="Steward C.A."/>
            <person name="Storey R."/>
            <person name="Swann R.M."/>
            <person name="Swarbreck D."/>
            <person name="Tabor P.E."/>
            <person name="Taudien S."/>
            <person name="Taylor T."/>
            <person name="Teague B."/>
            <person name="Thomas K."/>
            <person name="Thorpe A."/>
            <person name="Timms K."/>
            <person name="Tracey A."/>
            <person name="Trevanion S."/>
            <person name="Tromans A.C."/>
            <person name="d'Urso M."/>
            <person name="Verduzco D."/>
            <person name="Villasana D."/>
            <person name="Waldron L."/>
            <person name="Wall M."/>
            <person name="Wang Q."/>
            <person name="Warren J."/>
            <person name="Warry G.L."/>
            <person name="Wei X."/>
            <person name="West A."/>
            <person name="Whitehead S.L."/>
            <person name="Whiteley M.N."/>
            <person name="Wilkinson J.E."/>
            <person name="Willey D.L."/>
            <person name="Williams G."/>
            <person name="Williams L."/>
            <person name="Williamson A."/>
            <person name="Williamson H."/>
            <person name="Wilming L."/>
            <person name="Woodmansey R.L."/>
            <person name="Wray P.W."/>
            <person name="Yen J."/>
            <person name="Zhang J."/>
            <person name="Zhou J."/>
            <person name="Zoghbi H."/>
            <person name="Zorilla S."/>
            <person name="Buck D."/>
            <person name="Reinhardt R."/>
            <person name="Poustka A."/>
            <person name="Rosenthal A."/>
            <person name="Lehrach H."/>
            <person name="Meindl A."/>
            <person name="Minx P.J."/>
            <person name="Hillier L.W."/>
            <person name="Willard H.F."/>
            <person name="Wilson R.K."/>
            <person name="Waterston R.H."/>
            <person name="Rice C.M."/>
            <person name="Vaudin M."/>
            <person name="Coulson A."/>
            <person name="Nelson D.L."/>
            <person name="Weinstock G."/>
            <person name="Sulston J.E."/>
            <person name="Durbin R.M."/>
            <person name="Hubbard T."/>
            <person name="Gibbs R.A."/>
            <person name="Beck S."/>
            <person name="Rogers J."/>
            <person name="Bentley D.R."/>
        </authorList>
    </citation>
    <scope>NUCLEOTIDE SEQUENCE [LARGE SCALE GENOMIC DNA]</scope>
</reference>
<reference key="2">
    <citation type="submission" date="2005-09" db="EMBL/GenBank/DDBJ databases">
        <authorList>
            <person name="Mural R.J."/>
            <person name="Istrail S."/>
            <person name="Sutton G.G."/>
            <person name="Florea L."/>
            <person name="Halpern A.L."/>
            <person name="Mobarry C.M."/>
            <person name="Lippert R."/>
            <person name="Walenz B."/>
            <person name="Shatkay H."/>
            <person name="Dew I."/>
            <person name="Miller J.R."/>
            <person name="Flanigan M.J."/>
            <person name="Edwards N.J."/>
            <person name="Bolanos R."/>
            <person name="Fasulo D."/>
            <person name="Halldorsson B.V."/>
            <person name="Hannenhalli S."/>
            <person name="Turner R."/>
            <person name="Yooseph S."/>
            <person name="Lu F."/>
            <person name="Nusskern D.R."/>
            <person name="Shue B.C."/>
            <person name="Zheng X.H."/>
            <person name="Zhong F."/>
            <person name="Delcher A.L."/>
            <person name="Huson D.H."/>
            <person name="Kravitz S.A."/>
            <person name="Mouchard L."/>
            <person name="Reinert K."/>
            <person name="Remington K.A."/>
            <person name="Clark A.G."/>
            <person name="Waterman M.S."/>
            <person name="Eichler E.E."/>
            <person name="Adams M.D."/>
            <person name="Hunkapiller M.W."/>
            <person name="Myers E.W."/>
            <person name="Venter J.C."/>
        </authorList>
    </citation>
    <scope>NUCLEOTIDE SEQUENCE [LARGE SCALE GENOMIC DNA]</scope>
</reference>
<reference key="3">
    <citation type="journal article" date="2004" name="Genome Res.">
        <title>The status, quality, and expansion of the NIH full-length cDNA project: the Mammalian Gene Collection (MGC).</title>
        <authorList>
            <consortium name="The MGC Project Team"/>
        </authorList>
    </citation>
    <scope>NUCLEOTIDE SEQUENCE [LARGE SCALE MRNA] (ISOFORM 1)</scope>
    <scope>NUCLEOTIDE SEQUENCE [LARGE SCALE MRNA] OF 276-358 (ISOFORM 2)</scope>
    <source>
        <tissue>Bone</tissue>
        <tissue>Oligodendroglioma</tissue>
    </source>
</reference>
<reference key="4">
    <citation type="journal article" date="2004" name="Nat. Genet.">
        <title>Complete sequencing and characterization of 21,243 full-length human cDNAs.</title>
        <authorList>
            <person name="Ota T."/>
            <person name="Suzuki Y."/>
            <person name="Nishikawa T."/>
            <person name="Otsuki T."/>
            <person name="Sugiyama T."/>
            <person name="Irie R."/>
            <person name="Wakamatsu A."/>
            <person name="Hayashi K."/>
            <person name="Sato H."/>
            <person name="Nagai K."/>
            <person name="Kimura K."/>
            <person name="Makita H."/>
            <person name="Sekine M."/>
            <person name="Obayashi M."/>
            <person name="Nishi T."/>
            <person name="Shibahara T."/>
            <person name="Tanaka T."/>
            <person name="Ishii S."/>
            <person name="Yamamoto J."/>
            <person name="Saito K."/>
            <person name="Kawai Y."/>
            <person name="Isono Y."/>
            <person name="Nakamura Y."/>
            <person name="Nagahari K."/>
            <person name="Murakami K."/>
            <person name="Yasuda T."/>
            <person name="Iwayanagi T."/>
            <person name="Wagatsuma M."/>
            <person name="Shiratori A."/>
            <person name="Sudo H."/>
            <person name="Hosoiri T."/>
            <person name="Kaku Y."/>
            <person name="Kodaira H."/>
            <person name="Kondo H."/>
            <person name="Sugawara M."/>
            <person name="Takahashi M."/>
            <person name="Kanda K."/>
            <person name="Yokoi T."/>
            <person name="Furuya T."/>
            <person name="Kikkawa E."/>
            <person name="Omura Y."/>
            <person name="Abe K."/>
            <person name="Kamihara K."/>
            <person name="Katsuta N."/>
            <person name="Sato K."/>
            <person name="Tanikawa M."/>
            <person name="Yamazaki M."/>
            <person name="Ninomiya K."/>
            <person name="Ishibashi T."/>
            <person name="Yamashita H."/>
            <person name="Murakawa K."/>
            <person name="Fujimori K."/>
            <person name="Tanai H."/>
            <person name="Kimata M."/>
            <person name="Watanabe M."/>
            <person name="Hiraoka S."/>
            <person name="Chiba Y."/>
            <person name="Ishida S."/>
            <person name="Ono Y."/>
            <person name="Takiguchi S."/>
            <person name="Watanabe S."/>
            <person name="Yosida M."/>
            <person name="Hotuta T."/>
            <person name="Kusano J."/>
            <person name="Kanehori K."/>
            <person name="Takahashi-Fujii A."/>
            <person name="Hara H."/>
            <person name="Tanase T.-O."/>
            <person name="Nomura Y."/>
            <person name="Togiya S."/>
            <person name="Komai F."/>
            <person name="Hara R."/>
            <person name="Takeuchi K."/>
            <person name="Arita M."/>
            <person name="Imose N."/>
            <person name="Musashino K."/>
            <person name="Yuuki H."/>
            <person name="Oshima A."/>
            <person name="Sasaki N."/>
            <person name="Aotsuka S."/>
            <person name="Yoshikawa Y."/>
            <person name="Matsunawa H."/>
            <person name="Ichihara T."/>
            <person name="Shiohata N."/>
            <person name="Sano S."/>
            <person name="Moriya S."/>
            <person name="Momiyama H."/>
            <person name="Satoh N."/>
            <person name="Takami S."/>
            <person name="Terashima Y."/>
            <person name="Suzuki O."/>
            <person name="Nakagawa S."/>
            <person name="Senoh A."/>
            <person name="Mizoguchi H."/>
            <person name="Goto Y."/>
            <person name="Shimizu F."/>
            <person name="Wakebe H."/>
            <person name="Hishigaki H."/>
            <person name="Watanabe T."/>
            <person name="Sugiyama A."/>
            <person name="Takemoto M."/>
            <person name="Kawakami B."/>
            <person name="Yamazaki M."/>
            <person name="Watanabe K."/>
            <person name="Kumagai A."/>
            <person name="Itakura S."/>
            <person name="Fukuzumi Y."/>
            <person name="Fujimori Y."/>
            <person name="Komiyama M."/>
            <person name="Tashiro H."/>
            <person name="Tanigami A."/>
            <person name="Fujiwara T."/>
            <person name="Ono T."/>
            <person name="Yamada K."/>
            <person name="Fujii Y."/>
            <person name="Ozaki K."/>
            <person name="Hirao M."/>
            <person name="Ohmori Y."/>
            <person name="Kawabata A."/>
            <person name="Hikiji T."/>
            <person name="Kobatake N."/>
            <person name="Inagaki H."/>
            <person name="Ikema Y."/>
            <person name="Okamoto S."/>
            <person name="Okitani R."/>
            <person name="Kawakami T."/>
            <person name="Noguchi S."/>
            <person name="Itoh T."/>
            <person name="Shigeta K."/>
            <person name="Senba T."/>
            <person name="Matsumura K."/>
            <person name="Nakajima Y."/>
            <person name="Mizuno T."/>
            <person name="Morinaga M."/>
            <person name="Sasaki M."/>
            <person name="Togashi T."/>
            <person name="Oyama M."/>
            <person name="Hata H."/>
            <person name="Watanabe M."/>
            <person name="Komatsu T."/>
            <person name="Mizushima-Sugano J."/>
            <person name="Satoh T."/>
            <person name="Shirai Y."/>
            <person name="Takahashi Y."/>
            <person name="Nakagawa K."/>
            <person name="Okumura K."/>
            <person name="Nagase T."/>
            <person name="Nomura N."/>
            <person name="Kikuchi H."/>
            <person name="Masuho Y."/>
            <person name="Yamashita R."/>
            <person name="Nakai K."/>
            <person name="Yada T."/>
            <person name="Nakamura Y."/>
            <person name="Ohara O."/>
            <person name="Isogai T."/>
            <person name="Sugano S."/>
        </authorList>
    </citation>
    <scope>NUCLEOTIDE SEQUENCE [LARGE SCALE MRNA] (ISOFORM 3)</scope>
    <source>
        <tissue>Rectum</tissue>
    </source>
</reference>
<reference key="5">
    <citation type="journal article" date="2001" name="FEBS Lett.">
        <title>Identification of two proteins, S14 and UIP1, that interact with UCH37.</title>
        <authorList>
            <person name="Li T."/>
            <person name="Duan W."/>
            <person name="Yang H."/>
            <person name="Lee M.K."/>
            <person name="Bte Mustafa F."/>
            <person name="Lee B.H."/>
            <person name="Teo T.S."/>
        </authorList>
    </citation>
    <scope>NUCLEOTIDE SEQUENCE [MRNA] (ISOFORM 1)</scope>
    <scope>INTERACTION WITH UCHL5</scope>
    <scope>TISSUE SPECIFICITY</scope>
</reference>
<reference key="6">
    <citation type="journal article" date="1997" name="Gene">
        <title>Expressed STSs and transcription of human Xq28.</title>
        <authorList>
            <person name="Esposito T."/>
            <person name="Ciccodicola A."/>
            <person name="Flagiello L."/>
            <person name="Matarazzo M.R."/>
            <person name="Migliaccio C."/>
            <person name="Cifarelli R.A."/>
            <person name="Visone R."/>
            <person name="Campanile C."/>
            <person name="Mazzarella R."/>
            <person name="Schlessinger D."/>
            <person name="D'Urso M."/>
            <person name="D'Esposito M."/>
        </authorList>
    </citation>
    <scope>NUCLEOTIDE SEQUENCE [MRNA] OF 82-358 (ISOFORM 1)</scope>
    <source>
        <tissue>Fetal brain</tissue>
    </source>
</reference>
<reference key="7">
    <citation type="journal article" date="2007" name="BMC Genomics">
        <title>The full-ORF clone resource of the German cDNA consortium.</title>
        <authorList>
            <person name="Bechtel S."/>
            <person name="Rosenfelder H."/>
            <person name="Duda A."/>
            <person name="Schmidt C.P."/>
            <person name="Ernst U."/>
            <person name="Wellenreuther R."/>
            <person name="Mehrle A."/>
            <person name="Schuster C."/>
            <person name="Bahr A."/>
            <person name="Bloecker H."/>
            <person name="Heubner D."/>
            <person name="Hoerlein A."/>
            <person name="Michel G."/>
            <person name="Wedler H."/>
            <person name="Koehrer K."/>
            <person name="Ottenwaelder B."/>
            <person name="Poustka A."/>
            <person name="Wiemann S."/>
            <person name="Schupp I."/>
        </authorList>
    </citation>
    <scope>NUCLEOTIDE SEQUENCE [LARGE SCALE MRNA] OF 132-358 (ISOFORM 3)</scope>
    <source>
        <tissue>Testis</tissue>
    </source>
</reference>
<reference key="8">
    <citation type="journal article" date="2008" name="Proc. Natl. Acad. Sci. U.S.A.">
        <title>A quantitative atlas of mitotic phosphorylation.</title>
        <authorList>
            <person name="Dephoure N."/>
            <person name="Zhou C."/>
            <person name="Villen J."/>
            <person name="Beausoleil S.A."/>
            <person name="Bakalarski C.E."/>
            <person name="Elledge S.J."/>
            <person name="Gygi S.P."/>
        </authorList>
    </citation>
    <scope>PHOSPHORYLATION [LARGE SCALE ANALYSIS] AT SER-16</scope>
    <scope>IDENTIFICATION BY MASS SPECTROMETRY [LARGE SCALE ANALYSIS]</scope>
    <source>
        <tissue>Cervix carcinoma</tissue>
    </source>
</reference>
<reference key="9">
    <citation type="journal article" date="2009" name="Anal. Chem.">
        <title>Lys-N and trypsin cover complementary parts of the phosphoproteome in a refined SCX-based approach.</title>
        <authorList>
            <person name="Gauci S."/>
            <person name="Helbig A.O."/>
            <person name="Slijper M."/>
            <person name="Krijgsveld J."/>
            <person name="Heck A.J."/>
            <person name="Mohammed S."/>
        </authorList>
    </citation>
    <scope>IDENTIFICATION BY MASS SPECTROMETRY [LARGE SCALE ANALYSIS]</scope>
</reference>
<reference key="10">
    <citation type="journal article" date="2009" name="Curr. Biol.">
        <title>HAUS, the 8-subunit human augmin complex, regulates centrosome and spindle integrity.</title>
        <authorList>
            <person name="Lawo S."/>
            <person name="Bashkurov M."/>
            <person name="Mullin M."/>
            <person name="Ferreria M.G."/>
            <person name="Kittler R."/>
            <person name="Habermann B."/>
            <person name="Tagliaferro A."/>
            <person name="Poser I."/>
            <person name="Hutchins J.R.A."/>
            <person name="Hegemann B."/>
            <person name="Pinchev D."/>
            <person name="Buchholz F."/>
            <person name="Peters J.-M."/>
            <person name="Hyman A.A."/>
            <person name="Gingras A.-C."/>
            <person name="Pelletier L."/>
        </authorList>
    </citation>
    <scope>IDENTIFICATION IN THE HAUS AUGMIN-LIKE COMPLEX</scope>
    <scope>FUNCTION</scope>
    <scope>SUBCELLULAR LOCATION</scope>
</reference>
<reference key="11">
    <citation type="journal article" date="2009" name="Proc. Natl. Acad. Sci. U.S.A.">
        <title>The augmin complex plays a critical role in spindle microtubule generation for mitotic progression and cytokinesis in human cells.</title>
        <authorList>
            <person name="Uehara R."/>
            <person name="Nozawa R.-S."/>
            <person name="Tomioka A."/>
            <person name="Petry S."/>
            <person name="Vale R.D."/>
            <person name="Obuse C."/>
            <person name="Goshima G."/>
        </authorList>
    </citation>
    <scope>IDENTIFICATION IN THE HAUS AUGMIN-LIKE COMPLEX</scope>
    <scope>FUNCTION</scope>
    <scope>SUBCELLULAR LOCATION</scope>
</reference>
<reference key="12">
    <citation type="journal article" date="2013" name="J. Proteome Res.">
        <title>Toward a comprehensive characterization of a human cancer cell phosphoproteome.</title>
        <authorList>
            <person name="Zhou H."/>
            <person name="Di Palma S."/>
            <person name="Preisinger C."/>
            <person name="Peng M."/>
            <person name="Polat A.N."/>
            <person name="Heck A.J."/>
            <person name="Mohammed S."/>
        </authorList>
    </citation>
    <scope>PHOSPHORYLATION [LARGE SCALE ANALYSIS] AT SER-16</scope>
    <scope>IDENTIFICATION BY MASS SPECTROMETRY [LARGE SCALE ANALYSIS]</scope>
    <source>
        <tissue>Cervix carcinoma</tissue>
        <tissue>Erythroleukemia</tissue>
    </source>
</reference>
<reference key="13">
    <citation type="journal article" date="2019" name="J. Biol. Chem.">
        <title>The microtubule-associated protein EML3 regulates mitotic spindle assembly by recruiting the Augmin complex to spindle microtubules.</title>
        <authorList>
            <person name="Luo J."/>
            <person name="Yang B."/>
            <person name="Xin G."/>
            <person name="Sun M."/>
            <person name="Zhang B."/>
            <person name="Guo X."/>
            <person name="Jiang Q."/>
            <person name="Zhang C."/>
        </authorList>
    </citation>
    <scope>INTERACTION WITH EML3</scope>
    <scope>SUBCELLULAR LOCATION</scope>
</reference>
<name>HAUS7_HUMAN</name>
<gene>
    <name type="primary">HAUS7</name>
    <name type="synonym">UCHL5IP</name>
    <name type="synonym">UIP1</name>
</gene>